<dbReference type="EMBL" id="CR858404">
    <property type="protein sequence ID" value="CAH90631.1"/>
    <property type="molecule type" value="mRNA"/>
</dbReference>
<dbReference type="EMBL" id="CR859256">
    <property type="protein sequence ID" value="CAH91436.1"/>
    <property type="molecule type" value="mRNA"/>
</dbReference>
<dbReference type="EMBL" id="CR861463">
    <property type="protein sequence ID" value="CAH93519.1"/>
    <property type="molecule type" value="mRNA"/>
</dbReference>
<dbReference type="RefSeq" id="NP_001125844.1">
    <property type="nucleotide sequence ID" value="NM_001132372.1"/>
</dbReference>
<dbReference type="RefSeq" id="NP_001128913.1">
    <property type="nucleotide sequence ID" value="NM_001135441.1"/>
</dbReference>
<dbReference type="SMR" id="Q5R3Z7"/>
<dbReference type="FunCoup" id="Q5R3Z7">
    <property type="interactions" value="284"/>
</dbReference>
<dbReference type="STRING" id="9601.ENSPPYP00000005057"/>
<dbReference type="GlyCosmos" id="Q5R3Z7">
    <property type="glycosylation" value="7 sites, No reported glycans"/>
</dbReference>
<dbReference type="Ensembl" id="ENSPPYT00000005255.3">
    <molecule id="Q5R3Z7-1"/>
    <property type="protein sequence ID" value="ENSPPYP00000005057.3"/>
    <property type="gene ID" value="ENSPPYG00000004430.3"/>
</dbReference>
<dbReference type="Ensembl" id="ENSPPYT00000057282.1">
    <molecule id="Q5R3Z7-2"/>
    <property type="protein sequence ID" value="ENSPPYP00000044211.1"/>
    <property type="gene ID" value="ENSPPYG00000004430.3"/>
</dbReference>
<dbReference type="GeneID" id="100189859"/>
<dbReference type="KEGG" id="pon:100189859"/>
<dbReference type="CTD" id="4753"/>
<dbReference type="GeneTree" id="ENSGT00810000125439"/>
<dbReference type="InParanoid" id="Q5R3Z7"/>
<dbReference type="OrthoDB" id="6516201at2759"/>
<dbReference type="Proteomes" id="UP000001595">
    <property type="component" value="Chromosome 12"/>
</dbReference>
<dbReference type="GO" id="GO:0005737">
    <property type="term" value="C:cytoplasm"/>
    <property type="evidence" value="ECO:0007669"/>
    <property type="project" value="TreeGrafter"/>
</dbReference>
<dbReference type="GO" id="GO:0005576">
    <property type="term" value="C:extracellular region"/>
    <property type="evidence" value="ECO:0000250"/>
    <property type="project" value="UniProtKB"/>
</dbReference>
<dbReference type="GO" id="GO:0005615">
    <property type="term" value="C:extracellular space"/>
    <property type="evidence" value="ECO:0007669"/>
    <property type="project" value="TreeGrafter"/>
</dbReference>
<dbReference type="GO" id="GO:0005509">
    <property type="term" value="F:calcium ion binding"/>
    <property type="evidence" value="ECO:0000250"/>
    <property type="project" value="UniProtKB"/>
</dbReference>
<dbReference type="GO" id="GO:0008201">
    <property type="term" value="F:heparin binding"/>
    <property type="evidence" value="ECO:0007669"/>
    <property type="project" value="TreeGrafter"/>
</dbReference>
<dbReference type="GO" id="GO:0005080">
    <property type="term" value="F:protein kinase C binding"/>
    <property type="evidence" value="ECO:0007669"/>
    <property type="project" value="TreeGrafter"/>
</dbReference>
<dbReference type="GO" id="GO:0071679">
    <property type="term" value="P:commissural neuron axon guidance"/>
    <property type="evidence" value="ECO:0000250"/>
    <property type="project" value="UniProtKB"/>
</dbReference>
<dbReference type="GO" id="GO:0009566">
    <property type="term" value="P:fertilization"/>
    <property type="evidence" value="ECO:0000250"/>
    <property type="project" value="UniProtKB"/>
</dbReference>
<dbReference type="CDD" id="cd00054">
    <property type="entry name" value="EGF_CA"/>
    <property type="match status" value="3"/>
</dbReference>
<dbReference type="CDD" id="cd00110">
    <property type="entry name" value="LamG"/>
    <property type="match status" value="1"/>
</dbReference>
<dbReference type="FunFam" id="2.10.25.10:FF:000121">
    <property type="entry name" value="Neural EGFL like 2"/>
    <property type="match status" value="1"/>
</dbReference>
<dbReference type="FunFam" id="2.10.25.10:FF:000120">
    <property type="entry name" value="Protein kinase C-binding protein NELL1"/>
    <property type="match status" value="1"/>
</dbReference>
<dbReference type="FunFam" id="2.10.25.10:FF:000211">
    <property type="entry name" value="Protein kinase C-binding protein NELL1"/>
    <property type="match status" value="1"/>
</dbReference>
<dbReference type="FunFam" id="2.60.120.200:FF:000015">
    <property type="entry name" value="protein kinase C-binding protein NELL1"/>
    <property type="match status" value="1"/>
</dbReference>
<dbReference type="FunFam" id="2.10.25.10:FF:000102">
    <property type="entry name" value="Protein kinase C-binding protein NELL2"/>
    <property type="match status" value="1"/>
</dbReference>
<dbReference type="FunFam" id="2.10.25.10:FF:000111">
    <property type="entry name" value="Protein kinase C-binding protein NELL2"/>
    <property type="match status" value="1"/>
</dbReference>
<dbReference type="FunFam" id="2.10.70.10:FF:000023">
    <property type="entry name" value="protein kinase C-binding protein NELL2"/>
    <property type="match status" value="1"/>
</dbReference>
<dbReference type="Gene3D" id="2.60.120.200">
    <property type="match status" value="1"/>
</dbReference>
<dbReference type="Gene3D" id="6.20.200.20">
    <property type="match status" value="2"/>
</dbReference>
<dbReference type="Gene3D" id="2.10.70.10">
    <property type="entry name" value="Complement Module, domain 1"/>
    <property type="match status" value="1"/>
</dbReference>
<dbReference type="Gene3D" id="2.10.25.10">
    <property type="entry name" value="Laminin"/>
    <property type="match status" value="6"/>
</dbReference>
<dbReference type="InterPro" id="IPR013320">
    <property type="entry name" value="ConA-like_dom_sf"/>
</dbReference>
<dbReference type="InterPro" id="IPR001881">
    <property type="entry name" value="EGF-like_Ca-bd_dom"/>
</dbReference>
<dbReference type="InterPro" id="IPR000742">
    <property type="entry name" value="EGF-like_dom"/>
</dbReference>
<dbReference type="InterPro" id="IPR000152">
    <property type="entry name" value="EGF-type_Asp/Asn_hydroxyl_site"/>
</dbReference>
<dbReference type="InterPro" id="IPR018097">
    <property type="entry name" value="EGF_Ca-bd_CS"/>
</dbReference>
<dbReference type="InterPro" id="IPR024731">
    <property type="entry name" value="EGF_dom"/>
</dbReference>
<dbReference type="InterPro" id="IPR009030">
    <property type="entry name" value="Growth_fac_rcpt_cys_sf"/>
</dbReference>
<dbReference type="InterPro" id="IPR001791">
    <property type="entry name" value="Laminin_G"/>
</dbReference>
<dbReference type="InterPro" id="IPR049883">
    <property type="entry name" value="NOTCH1_EGF-like"/>
</dbReference>
<dbReference type="InterPro" id="IPR051586">
    <property type="entry name" value="PKC-binding_NELL"/>
</dbReference>
<dbReference type="InterPro" id="IPR048287">
    <property type="entry name" value="TSPN-like_N"/>
</dbReference>
<dbReference type="InterPro" id="IPR001007">
    <property type="entry name" value="VWF_dom"/>
</dbReference>
<dbReference type="PANTHER" id="PTHR24042">
    <property type="entry name" value="NEL HOMOLOG"/>
    <property type="match status" value="1"/>
</dbReference>
<dbReference type="PANTHER" id="PTHR24042:SF0">
    <property type="entry name" value="PROTEIN KINASE C-BINDING PROTEIN NELL2"/>
    <property type="match status" value="1"/>
</dbReference>
<dbReference type="Pfam" id="PF12947">
    <property type="entry name" value="EGF_3"/>
    <property type="match status" value="1"/>
</dbReference>
<dbReference type="Pfam" id="PF07645">
    <property type="entry name" value="EGF_CA"/>
    <property type="match status" value="3"/>
</dbReference>
<dbReference type="Pfam" id="PF02210">
    <property type="entry name" value="Laminin_G_2"/>
    <property type="match status" value="1"/>
</dbReference>
<dbReference type="Pfam" id="PF00093">
    <property type="entry name" value="VWC"/>
    <property type="match status" value="2"/>
</dbReference>
<dbReference type="SMART" id="SM00181">
    <property type="entry name" value="EGF"/>
    <property type="match status" value="6"/>
</dbReference>
<dbReference type="SMART" id="SM00179">
    <property type="entry name" value="EGF_CA"/>
    <property type="match status" value="5"/>
</dbReference>
<dbReference type="SMART" id="SM00282">
    <property type="entry name" value="LamG"/>
    <property type="match status" value="1"/>
</dbReference>
<dbReference type="SMART" id="SM00210">
    <property type="entry name" value="TSPN"/>
    <property type="match status" value="1"/>
</dbReference>
<dbReference type="SMART" id="SM00214">
    <property type="entry name" value="VWC"/>
    <property type="match status" value="3"/>
</dbReference>
<dbReference type="SMART" id="SM00215">
    <property type="entry name" value="VWC_out"/>
    <property type="match status" value="2"/>
</dbReference>
<dbReference type="SUPFAM" id="SSF49899">
    <property type="entry name" value="Concanavalin A-like lectins/glucanases"/>
    <property type="match status" value="1"/>
</dbReference>
<dbReference type="SUPFAM" id="SSF57196">
    <property type="entry name" value="EGF/Laminin"/>
    <property type="match status" value="1"/>
</dbReference>
<dbReference type="SUPFAM" id="SSF57603">
    <property type="entry name" value="FnI-like domain"/>
    <property type="match status" value="2"/>
</dbReference>
<dbReference type="SUPFAM" id="SSF57184">
    <property type="entry name" value="Growth factor receptor domain"/>
    <property type="match status" value="1"/>
</dbReference>
<dbReference type="PROSITE" id="PS00010">
    <property type="entry name" value="ASX_HYDROXYL"/>
    <property type="match status" value="3"/>
</dbReference>
<dbReference type="PROSITE" id="PS00022">
    <property type="entry name" value="EGF_1"/>
    <property type="match status" value="1"/>
</dbReference>
<dbReference type="PROSITE" id="PS01186">
    <property type="entry name" value="EGF_2"/>
    <property type="match status" value="4"/>
</dbReference>
<dbReference type="PROSITE" id="PS50026">
    <property type="entry name" value="EGF_3"/>
    <property type="match status" value="6"/>
</dbReference>
<dbReference type="PROSITE" id="PS01187">
    <property type="entry name" value="EGF_CA"/>
    <property type="match status" value="3"/>
</dbReference>
<dbReference type="PROSITE" id="PS01208">
    <property type="entry name" value="VWFC_1"/>
    <property type="match status" value="2"/>
</dbReference>
<dbReference type="PROSITE" id="PS50184">
    <property type="entry name" value="VWFC_2"/>
    <property type="match status" value="3"/>
</dbReference>
<accession>Q5R3Z7</accession>
<accession>Q5R9X4</accession>
<accession>Q5RC76</accession>
<name>NELL2_PONAB</name>
<comment type="function">
    <text evidence="1 2">Plays multiple roles in neural tissues, regulates neuronal proliferation, survival, differentiation, polarization, as well as axon guidance and synaptic functions. Plays an important role in axon development during neuronal differentiation through the MAPK intracellular signaling pathway (By similarity). Via binding to its receptor ROBO3, plays a role in axon guidance, functions as a repulsive guidance cue for commissural axons, helping to steer them across the spinal cord midline (By similarity). Required for neuron survival through the modulation of MAPK signaling pathways too. Involved in the regulation of hypothalamic GNRH secretion and the control of puberty (By similarity).</text>
</comment>
<comment type="function">
    <text evidence="1">Testicular luminal protein that signals through a ROS1-pathway to regulate the epididymal initial segment (IS) maturation, sperm maturation and male fertility.</text>
</comment>
<comment type="subunit">
    <text evidence="1 2">Homotrimer (By similarity). Binds to PRKCB (By similarity). Interacts with NICOL1; this interaction triggers epididymal differentiation (By similarity).</text>
</comment>
<comment type="subcellular location">
    <subcellularLocation>
        <location evidence="2">Secreted</location>
    </subcellularLocation>
</comment>
<comment type="alternative products">
    <event type="alternative splicing"/>
    <isoform>
        <id>Q5R3Z7-1</id>
        <name>1</name>
        <sequence type="displayed"/>
    </isoform>
    <isoform>
        <id>Q5R3Z7-2</id>
        <name>2</name>
        <sequence type="described" ref="VSP_035803"/>
    </isoform>
</comment>
<reference key="1">
    <citation type="submission" date="2004-11" db="EMBL/GenBank/DDBJ databases">
        <authorList>
            <consortium name="The German cDNA consortium"/>
        </authorList>
    </citation>
    <scope>NUCLEOTIDE SEQUENCE [LARGE SCALE MRNA] (ISOFORMS 1 AND 2)</scope>
    <source>
        <tissue>Brain cortex</tissue>
    </source>
</reference>
<feature type="signal peptide" evidence="3">
    <location>
        <begin position="1"/>
        <end position="21"/>
    </location>
</feature>
<feature type="chain" id="PRO_0000354682" description="Protein kinase C-binding protein NELL2">
    <location>
        <begin position="22"/>
        <end position="816"/>
    </location>
</feature>
<feature type="domain" description="Laminin G-like">
    <location>
        <begin position="64"/>
        <end position="228"/>
    </location>
</feature>
<feature type="domain" description="VWFC 1" evidence="6">
    <location>
        <begin position="272"/>
        <end position="331"/>
    </location>
</feature>
<feature type="domain" description="EGF-like 1" evidence="5">
    <location>
        <begin position="397"/>
        <end position="439"/>
    </location>
</feature>
<feature type="domain" description="EGF-like 2; calcium-binding" evidence="5">
    <location>
        <begin position="440"/>
        <end position="481"/>
    </location>
</feature>
<feature type="domain" description="EGF-like 3; calcium-binding" evidence="5">
    <location>
        <begin position="482"/>
        <end position="522"/>
    </location>
</feature>
<feature type="domain" description="EGF-like 4" evidence="5">
    <location>
        <begin position="523"/>
        <end position="553"/>
    </location>
</feature>
<feature type="domain" description="EGF-like 5; calcium-binding" evidence="5">
    <location>
        <begin position="555"/>
        <end position="601"/>
    </location>
</feature>
<feature type="domain" description="EGF-like 6; calcium-binding" evidence="5">
    <location>
        <begin position="602"/>
        <end position="637"/>
    </location>
</feature>
<feature type="domain" description="VWFC 2" evidence="6">
    <location>
        <begin position="638"/>
        <end position="693"/>
    </location>
</feature>
<feature type="domain" description="VWFC 3" evidence="6">
    <location>
        <begin position="698"/>
        <end position="756"/>
    </location>
</feature>
<feature type="binding site" evidence="3">
    <location>
        <position position="440"/>
    </location>
    <ligand>
        <name>Ca(2+)</name>
        <dbReference type="ChEBI" id="CHEBI:29108"/>
    </ligand>
</feature>
<feature type="binding site" evidence="3">
    <location>
        <position position="441"/>
    </location>
    <ligand>
        <name>Ca(2+)</name>
        <dbReference type="ChEBI" id="CHEBI:29108"/>
    </ligand>
</feature>
<feature type="binding site" evidence="3">
    <location>
        <position position="443"/>
    </location>
    <ligand>
        <name>Ca(2+)</name>
        <dbReference type="ChEBI" id="CHEBI:29108"/>
    </ligand>
</feature>
<feature type="binding site" evidence="3">
    <location>
        <position position="459"/>
    </location>
    <ligand>
        <name>Ca(2+)</name>
        <dbReference type="ChEBI" id="CHEBI:29108"/>
    </ligand>
</feature>
<feature type="binding site" evidence="3">
    <location>
        <position position="460"/>
    </location>
    <ligand>
        <name>Ca(2+)</name>
        <dbReference type="ChEBI" id="CHEBI:29108"/>
    </ligand>
</feature>
<feature type="binding site" evidence="3">
    <location>
        <position position="463"/>
    </location>
    <ligand>
        <name>Ca(2+)</name>
        <dbReference type="ChEBI" id="CHEBI:29108"/>
    </ligand>
</feature>
<feature type="binding site" evidence="3">
    <location>
        <position position="555"/>
    </location>
    <ligand>
        <name>Ca(2+)</name>
        <dbReference type="ChEBI" id="CHEBI:29108"/>
    </ligand>
</feature>
<feature type="binding site" evidence="3">
    <location>
        <position position="556"/>
    </location>
    <ligand>
        <name>Ca(2+)</name>
        <dbReference type="ChEBI" id="CHEBI:29108"/>
    </ligand>
</feature>
<feature type="binding site" evidence="3">
    <location>
        <position position="558"/>
    </location>
    <ligand>
        <name>Ca(2+)</name>
        <dbReference type="ChEBI" id="CHEBI:29108"/>
    </ligand>
</feature>
<feature type="binding site" evidence="3">
    <location>
        <position position="574"/>
    </location>
    <ligand>
        <name>Ca(2+)</name>
        <dbReference type="ChEBI" id="CHEBI:29108"/>
    </ligand>
</feature>
<feature type="binding site" evidence="3">
    <location>
        <position position="575"/>
    </location>
    <ligand>
        <name>Ca(2+)</name>
        <dbReference type="ChEBI" id="CHEBI:29108"/>
    </ligand>
</feature>
<feature type="binding site" evidence="3">
    <location>
        <position position="578"/>
    </location>
    <ligand>
        <name>Ca(2+)</name>
        <dbReference type="ChEBI" id="CHEBI:29108"/>
    </ligand>
</feature>
<feature type="binding site" evidence="3">
    <location>
        <position position="602"/>
    </location>
    <ligand>
        <name>Ca(2+)</name>
        <dbReference type="ChEBI" id="CHEBI:29108"/>
    </ligand>
</feature>
<feature type="binding site" evidence="3">
    <location>
        <position position="603"/>
    </location>
    <ligand>
        <name>Ca(2+)</name>
        <dbReference type="ChEBI" id="CHEBI:29108"/>
    </ligand>
</feature>
<feature type="binding site" evidence="3">
    <location>
        <position position="605"/>
    </location>
    <ligand>
        <name>Ca(2+)</name>
        <dbReference type="ChEBI" id="CHEBI:29108"/>
    </ligand>
</feature>
<feature type="binding site" evidence="3">
    <location>
        <position position="621"/>
    </location>
    <ligand>
        <name>Ca(2+)</name>
        <dbReference type="ChEBI" id="CHEBI:29108"/>
    </ligand>
</feature>
<feature type="binding site" evidence="3">
    <location>
        <position position="622"/>
    </location>
    <ligand>
        <name>Ca(2+)</name>
        <dbReference type="ChEBI" id="CHEBI:29108"/>
    </ligand>
</feature>
<feature type="binding site" evidence="3">
    <location>
        <position position="625"/>
    </location>
    <ligand>
        <name>Ca(2+)</name>
        <dbReference type="ChEBI" id="CHEBI:29108"/>
    </ligand>
</feature>
<feature type="glycosylation site" description="N-linked (GlcNAc...) asparagine" evidence="4">
    <location>
        <position position="53"/>
    </location>
</feature>
<feature type="glycosylation site" description="N-linked (GlcNAc...) asparagine" evidence="4">
    <location>
        <position position="225"/>
    </location>
</feature>
<feature type="glycosylation site" description="N-linked (GlcNAc...) asparagine" evidence="4">
    <location>
        <position position="293"/>
    </location>
</feature>
<feature type="glycosylation site" description="N-linked (GlcNAc...) asparagine" evidence="4">
    <location>
        <position position="298"/>
    </location>
</feature>
<feature type="glycosylation site" description="N-linked (GlcNAc...) asparagine" evidence="3">
    <location>
        <position position="517"/>
    </location>
</feature>
<feature type="glycosylation site" description="O-linked (GlcNAc...) threonine" evidence="3">
    <location>
        <position position="548"/>
    </location>
</feature>
<feature type="glycosylation site" description="N-linked (GlcNAc...) asparagine" evidence="4">
    <location>
        <position position="615"/>
    </location>
</feature>
<feature type="glycosylation site" description="N-linked (GlcNAc...) asparagine" evidence="4">
    <location>
        <position position="635"/>
    </location>
</feature>
<feature type="disulfide bond" evidence="3">
    <location>
        <begin position="401"/>
        <end position="413"/>
    </location>
</feature>
<feature type="disulfide bond" evidence="3">
    <location>
        <begin position="407"/>
        <end position="422"/>
    </location>
</feature>
<feature type="disulfide bond" evidence="3">
    <location>
        <begin position="424"/>
        <end position="438"/>
    </location>
</feature>
<feature type="disulfide bond" evidence="3">
    <location>
        <begin position="444"/>
        <end position="457"/>
    </location>
</feature>
<feature type="disulfide bond" evidence="3">
    <location>
        <begin position="451"/>
        <end position="466"/>
    </location>
</feature>
<feature type="disulfide bond" evidence="3">
    <location>
        <begin position="468"/>
        <end position="480"/>
    </location>
</feature>
<feature type="disulfide bond" evidence="3">
    <location>
        <begin position="486"/>
        <end position="499"/>
    </location>
</feature>
<feature type="disulfide bond" evidence="3">
    <location>
        <begin position="493"/>
        <end position="508"/>
    </location>
</feature>
<feature type="disulfide bond" evidence="3">
    <location>
        <begin position="510"/>
        <end position="521"/>
    </location>
</feature>
<feature type="disulfide bond" evidence="3">
    <location>
        <begin position="525"/>
        <end position="535"/>
    </location>
</feature>
<feature type="disulfide bond" evidence="3">
    <location>
        <begin position="529"/>
        <end position="541"/>
    </location>
</feature>
<feature type="disulfide bond" evidence="3">
    <location>
        <begin position="543"/>
        <end position="552"/>
    </location>
</feature>
<feature type="disulfide bond" evidence="3">
    <location>
        <begin position="559"/>
        <end position="572"/>
    </location>
</feature>
<feature type="disulfide bond" evidence="3">
    <location>
        <begin position="566"/>
        <end position="581"/>
    </location>
</feature>
<feature type="disulfide bond" evidence="3">
    <location>
        <begin position="583"/>
        <end position="600"/>
    </location>
</feature>
<feature type="disulfide bond" evidence="3">
    <location>
        <begin position="606"/>
        <end position="619"/>
    </location>
</feature>
<feature type="disulfide bond" evidence="3">
    <location>
        <begin position="613"/>
        <end position="628"/>
    </location>
</feature>
<feature type="disulfide bond" evidence="3">
    <location>
        <begin position="630"/>
        <end position="636"/>
    </location>
</feature>
<feature type="splice variant" id="VSP_035803" description="In isoform 2." evidence="7">
    <original>SRVLLRTFCLIFGLGA</original>
    <variation>TGLGAPLFKAWLLIS</variation>
    <location>
        <begin position="3"/>
        <end position="18"/>
    </location>
</feature>
<feature type="sequence conflict" description="In Ref. 1; CAH91436." evidence="8" ref="1">
    <original>H</original>
    <variation>R</variation>
    <location>
        <position position="137"/>
    </location>
</feature>
<feature type="sequence conflict" description="In Ref. 1; CAH91436." evidence="8" ref="1">
    <original>M</original>
    <variation>T</variation>
    <location>
        <position position="456"/>
    </location>
</feature>
<feature type="sequence conflict" description="In Ref. 1; CAH91436." evidence="8" ref="1">
    <original>N</original>
    <variation>S</variation>
    <location>
        <position position="496"/>
    </location>
</feature>
<feature type="sequence conflict" description="In Ref. 1; CAH93519." evidence="8" ref="1">
    <original>N</original>
    <variation>S</variation>
    <location>
        <position position="531"/>
    </location>
</feature>
<feature type="sequence conflict" description="In Ref. 1; CAH90631." evidence="8" ref="1">
    <original>Q</original>
    <variation>H</variation>
    <location>
        <position position="545"/>
    </location>
</feature>
<feature type="sequence conflict" description="In Ref. 1; CAH90631." evidence="8" ref="1">
    <original>D</original>
    <variation>G</variation>
    <location>
        <position position="616"/>
    </location>
</feature>
<feature type="sequence conflict" description="In Ref. 1; CAH90631." evidence="8" ref="1">
    <original>T</original>
    <variation>I</variation>
    <location>
        <position position="683"/>
    </location>
</feature>
<sequence length="816" mass="91304">MESRVLLRTFCLIFGLGAVWGLGVDPSLQIDVLTELELGESTTGVRQVPGLHNGTKAFLFQDTPRSVKASTATAEQFFQKLRNKHEFTILVTLKQTHLNSGVILSIHHLDHRYLELESSGHRNEVRLHYRSGSHRPHTEVFPYILADDKWHKLSLAISASHLILHIDCNKIYERVVEKPSTDLPLGTTFWLGQRNNAHGYFKGIMQDVQLLVMPQGFIAQCPDLNRTCPTCNDFHGLVQKIMELQDILAKTSAKLSRAEQRMNRLDQCYCERTCTMKGTTYREFESWIDGCKNCTCLNGTIQCETLICPNPDCPLNSALAYVDGKCCKECKSICQFQGRTYFEGERNTVYSSSGVCVLYECKDQTMKLVESSGCPALDCPESHQITLSHSCCKVCKGYDFCSERHNCMENSVCRNLNDRAVCSCRDGFRALREDNAYCEDIDECAEGRHYCRENTMCVNTPGSFMCICKTGYIRIDDYSCTEHDECITNQHNCDENALCFNTVGGHNCVCKPGYTGNGTTCKAFCKDGCRNGGACIAANVCACPQGFTGPSCETDIDECSDGFVQCDSRANCINLPGWYHCECRDGYHDNGMFSPSGESCEDIDECGTGRHSCANDTICFNLDGGYDCRCPHGKNCTGDCIHDGKVKHNGQIWVLENDRCSVCSCQNGFVMCRRMVCDCENPTVDLFCCPECDPRLSSQCLHQNGETLYNSGDTWVQNCQQCRCLQGEVDCWPLPCPDVECEFSILPENECCPRCVTDPCQADTIRNDITKTCLDEMNVVRFTGSSWIKHGTECTLCQCKNGHICCSVDPQCLQEL</sequence>
<proteinExistence type="evidence at transcript level"/>
<gene>
    <name type="primary">NELL2</name>
</gene>
<evidence type="ECO:0000250" key="1">
    <source>
        <dbReference type="UniProtKB" id="Q61220"/>
    </source>
</evidence>
<evidence type="ECO:0000250" key="2">
    <source>
        <dbReference type="UniProtKB" id="Q62918"/>
    </source>
</evidence>
<evidence type="ECO:0000250" key="3">
    <source>
        <dbReference type="UniProtKB" id="Q99435"/>
    </source>
</evidence>
<evidence type="ECO:0000255" key="4"/>
<evidence type="ECO:0000255" key="5">
    <source>
        <dbReference type="PROSITE-ProRule" id="PRU00076"/>
    </source>
</evidence>
<evidence type="ECO:0000255" key="6">
    <source>
        <dbReference type="PROSITE-ProRule" id="PRU00220"/>
    </source>
</evidence>
<evidence type="ECO:0000303" key="7">
    <source ref="1"/>
</evidence>
<evidence type="ECO:0000305" key="8"/>
<organism>
    <name type="scientific">Pongo abelii</name>
    <name type="common">Sumatran orangutan</name>
    <name type="synonym">Pongo pygmaeus abelii</name>
    <dbReference type="NCBI Taxonomy" id="9601"/>
    <lineage>
        <taxon>Eukaryota</taxon>
        <taxon>Metazoa</taxon>
        <taxon>Chordata</taxon>
        <taxon>Craniata</taxon>
        <taxon>Vertebrata</taxon>
        <taxon>Euteleostomi</taxon>
        <taxon>Mammalia</taxon>
        <taxon>Eutheria</taxon>
        <taxon>Euarchontoglires</taxon>
        <taxon>Primates</taxon>
        <taxon>Haplorrhini</taxon>
        <taxon>Catarrhini</taxon>
        <taxon>Hominidae</taxon>
        <taxon>Pongo</taxon>
    </lineage>
</organism>
<keyword id="KW-0025">Alternative splicing</keyword>
<keyword id="KW-0106">Calcium</keyword>
<keyword id="KW-1015">Disulfide bond</keyword>
<keyword id="KW-0245">EGF-like domain</keyword>
<keyword id="KW-0325">Glycoprotein</keyword>
<keyword id="KW-0479">Metal-binding</keyword>
<keyword id="KW-1185">Reference proteome</keyword>
<keyword id="KW-0677">Repeat</keyword>
<keyword id="KW-0964">Secreted</keyword>
<keyword id="KW-0732">Signal</keyword>
<protein>
    <recommendedName>
        <fullName>Protein kinase C-binding protein NELL2</fullName>
    </recommendedName>
    <alternativeName>
        <fullName>NEL-like protein 2</fullName>
    </alternativeName>
</protein>